<reference key="1">
    <citation type="journal article" date="2000" name="DNA Res.">
        <title>Complete structure of the chloroplast genome of a legume, Lotus japonicus.</title>
        <authorList>
            <person name="Kato T."/>
            <person name="Kaneko T."/>
            <person name="Sato S."/>
            <person name="Nakamura Y."/>
            <person name="Tabata S."/>
        </authorList>
    </citation>
    <scope>NUCLEOTIDE SEQUENCE [LARGE SCALE GENOMIC DNA]</scope>
    <source>
        <strain>cv. Miyakojima MG-20</strain>
    </source>
</reference>
<geneLocation type="chloroplast"/>
<keyword id="KW-0150">Chloroplast</keyword>
<keyword id="KW-0472">Membrane</keyword>
<keyword id="KW-0602">Photosynthesis</keyword>
<keyword id="KW-0604">Photosystem II</keyword>
<keyword id="KW-0934">Plastid</keyword>
<keyword id="KW-0674">Reaction center</keyword>
<keyword id="KW-0793">Thylakoid</keyword>
<keyword id="KW-0812">Transmembrane</keyword>
<keyword id="KW-1133">Transmembrane helix</keyword>
<protein>
    <recommendedName>
        <fullName evidence="1">Photosystem II reaction center protein J</fullName>
        <shortName evidence="1">PSII-J</shortName>
    </recommendedName>
</protein>
<feature type="chain" id="PRO_0000216597" description="Photosystem II reaction center protein J">
    <location>
        <begin position="1"/>
        <end position="40"/>
    </location>
</feature>
<feature type="transmembrane region" description="Helical" evidence="1">
    <location>
        <begin position="8"/>
        <end position="28"/>
    </location>
</feature>
<evidence type="ECO:0000255" key="1">
    <source>
        <dbReference type="HAMAP-Rule" id="MF_01305"/>
    </source>
</evidence>
<sequence>MADTTGRIPLWIIGTVTGITVIGLIGIFFYGSYSGLGSSL</sequence>
<organism>
    <name type="scientific">Lotus japonicus</name>
    <name type="common">Lotus corniculatus var. japonicus</name>
    <dbReference type="NCBI Taxonomy" id="34305"/>
    <lineage>
        <taxon>Eukaryota</taxon>
        <taxon>Viridiplantae</taxon>
        <taxon>Streptophyta</taxon>
        <taxon>Embryophyta</taxon>
        <taxon>Tracheophyta</taxon>
        <taxon>Spermatophyta</taxon>
        <taxon>Magnoliopsida</taxon>
        <taxon>eudicotyledons</taxon>
        <taxon>Gunneridae</taxon>
        <taxon>Pentapetalae</taxon>
        <taxon>rosids</taxon>
        <taxon>fabids</taxon>
        <taxon>Fabales</taxon>
        <taxon>Fabaceae</taxon>
        <taxon>Papilionoideae</taxon>
        <taxon>50 kb inversion clade</taxon>
        <taxon>NPAAA clade</taxon>
        <taxon>Hologalegina</taxon>
        <taxon>robinioid clade</taxon>
        <taxon>Loteae</taxon>
        <taxon>Lotus</taxon>
    </lineage>
</organism>
<proteinExistence type="inferred from homology"/>
<accession>Q9BBR7</accession>
<name>PSBJ_LOTJA</name>
<comment type="function">
    <text evidence="1">One of the components of the core complex of photosystem II (PSII). PSII is a light-driven water:plastoquinone oxidoreductase that uses light energy to abstract electrons from H(2)O, generating O(2) and a proton gradient subsequently used for ATP formation. It consists of a core antenna complex that captures photons, and an electron transfer chain that converts photonic excitation into a charge separation.</text>
</comment>
<comment type="subunit">
    <text evidence="1">PSII is composed of 1 copy each of membrane proteins PsbA, PsbB, PsbC, PsbD, PsbE, PsbF, PsbH, PsbI, PsbJ, PsbK, PsbL, PsbM, PsbT, PsbX, PsbY, PsbZ, Psb30/Ycf12, at least 3 peripheral proteins of the oxygen-evolving complex and a large number of cofactors. It forms dimeric complexes.</text>
</comment>
<comment type="subcellular location">
    <subcellularLocation>
        <location evidence="1">Plastid</location>
        <location evidence="1">Chloroplast thylakoid membrane</location>
        <topology evidence="1">Single-pass membrane protein</topology>
    </subcellularLocation>
</comment>
<comment type="similarity">
    <text evidence="1">Belongs to the PsbJ family.</text>
</comment>
<dbReference type="EMBL" id="AP002983">
    <property type="protein sequence ID" value="BAB33210.1"/>
    <property type="molecule type" value="Genomic_DNA"/>
</dbReference>
<dbReference type="RefSeq" id="NP_084812.1">
    <property type="nucleotide sequence ID" value="NC_002694.1"/>
</dbReference>
<dbReference type="SMR" id="Q9BBR7"/>
<dbReference type="GeneID" id="802928"/>
<dbReference type="GO" id="GO:0009535">
    <property type="term" value="C:chloroplast thylakoid membrane"/>
    <property type="evidence" value="ECO:0007669"/>
    <property type="project" value="UniProtKB-SubCell"/>
</dbReference>
<dbReference type="GO" id="GO:0009539">
    <property type="term" value="C:photosystem II reaction center"/>
    <property type="evidence" value="ECO:0007669"/>
    <property type="project" value="InterPro"/>
</dbReference>
<dbReference type="GO" id="GO:0015979">
    <property type="term" value="P:photosynthesis"/>
    <property type="evidence" value="ECO:0007669"/>
    <property type="project" value="UniProtKB-UniRule"/>
</dbReference>
<dbReference type="Gene3D" id="6.10.250.2070">
    <property type="match status" value="1"/>
</dbReference>
<dbReference type="HAMAP" id="MF_01305">
    <property type="entry name" value="PSII_PsbJ"/>
    <property type="match status" value="1"/>
</dbReference>
<dbReference type="InterPro" id="IPR002682">
    <property type="entry name" value="PSII_PsbJ"/>
</dbReference>
<dbReference type="InterPro" id="IPR037267">
    <property type="entry name" value="PSII_PsbJ_sf"/>
</dbReference>
<dbReference type="NCBIfam" id="NF002722">
    <property type="entry name" value="PRK02565.1"/>
    <property type="match status" value="1"/>
</dbReference>
<dbReference type="PANTHER" id="PTHR34812">
    <property type="entry name" value="PHOTOSYSTEM II REACTION CENTER PROTEIN J"/>
    <property type="match status" value="1"/>
</dbReference>
<dbReference type="PANTHER" id="PTHR34812:SF3">
    <property type="entry name" value="PHOTOSYSTEM II REACTION CENTER PROTEIN J"/>
    <property type="match status" value="1"/>
</dbReference>
<dbReference type="Pfam" id="PF01788">
    <property type="entry name" value="PsbJ"/>
    <property type="match status" value="1"/>
</dbReference>
<dbReference type="SUPFAM" id="SSF161021">
    <property type="entry name" value="Photosystem II reaction center protein J, PsbJ"/>
    <property type="match status" value="1"/>
</dbReference>
<gene>
    <name evidence="1" type="primary">psbJ</name>
</gene>